<organism>
    <name type="scientific">Synechococcus sp. (strain CC9902)</name>
    <dbReference type="NCBI Taxonomy" id="316279"/>
    <lineage>
        <taxon>Bacteria</taxon>
        <taxon>Bacillati</taxon>
        <taxon>Cyanobacteriota</taxon>
        <taxon>Cyanophyceae</taxon>
        <taxon>Synechococcales</taxon>
        <taxon>Synechococcaceae</taxon>
        <taxon>Synechococcus</taxon>
    </lineage>
</organism>
<reference key="1">
    <citation type="submission" date="2005-08" db="EMBL/GenBank/DDBJ databases">
        <title>Complete sequence of Synechococcus sp. CC9902.</title>
        <authorList>
            <person name="Copeland A."/>
            <person name="Lucas S."/>
            <person name="Lapidus A."/>
            <person name="Barry K."/>
            <person name="Detter J.C."/>
            <person name="Glavina T."/>
            <person name="Hammon N."/>
            <person name="Israni S."/>
            <person name="Pitluck S."/>
            <person name="Martinez M."/>
            <person name="Schmutz J."/>
            <person name="Larimer F."/>
            <person name="Land M."/>
            <person name="Kyrpides N."/>
            <person name="Ivanova N."/>
            <person name="Richardson P."/>
        </authorList>
    </citation>
    <scope>NUCLEOTIDE SEQUENCE [LARGE SCALE GENOMIC DNA]</scope>
    <source>
        <strain>CC9902</strain>
    </source>
</reference>
<protein>
    <recommendedName>
        <fullName evidence="1">Large ribosomal subunit protein uL18</fullName>
    </recommendedName>
    <alternativeName>
        <fullName evidence="3">50S ribosomal protein L18</fullName>
    </alternativeName>
</protein>
<sequence length="122" mass="13356">MSKLSRKQQTQKRHRRLRRHITGTSNRPRLAVFRSNNHIYAQLIDDAAQSTLCSASTVDKELRSGLKNNAGSCDASVAVGALVAKRAIAKGIEQVVFDRGGNLYHGRIKALADAAREAGLQF</sequence>
<feature type="chain" id="PRO_0000251383" description="Large ribosomal subunit protein uL18">
    <location>
        <begin position="1"/>
        <end position="122"/>
    </location>
</feature>
<feature type="region of interest" description="Disordered" evidence="2">
    <location>
        <begin position="1"/>
        <end position="25"/>
    </location>
</feature>
<feature type="compositionally biased region" description="Basic residues" evidence="2">
    <location>
        <begin position="1"/>
        <end position="21"/>
    </location>
</feature>
<gene>
    <name evidence="1" type="primary">rplR</name>
    <name evidence="1" type="synonym">rpl18</name>
    <name type="ordered locus">Syncc9902_1970</name>
</gene>
<comment type="function">
    <text evidence="1">This is one of the proteins that bind and probably mediate the attachment of the 5S RNA into the large ribosomal subunit, where it forms part of the central protuberance.</text>
</comment>
<comment type="subunit">
    <text evidence="1">Part of the 50S ribosomal subunit; part of the 5S rRNA/L5/L18/L25 subcomplex. Contacts the 5S and 23S rRNAs.</text>
</comment>
<comment type="similarity">
    <text evidence="1">Belongs to the universal ribosomal protein uL18 family.</text>
</comment>
<evidence type="ECO:0000255" key="1">
    <source>
        <dbReference type="HAMAP-Rule" id="MF_01337"/>
    </source>
</evidence>
<evidence type="ECO:0000256" key="2">
    <source>
        <dbReference type="SAM" id="MobiDB-lite"/>
    </source>
</evidence>
<evidence type="ECO:0000305" key="3"/>
<name>RL18_SYNS9</name>
<proteinExistence type="inferred from homology"/>
<dbReference type="EMBL" id="CP000097">
    <property type="protein sequence ID" value="ABB26928.1"/>
    <property type="molecule type" value="Genomic_DNA"/>
</dbReference>
<dbReference type="RefSeq" id="WP_011360724.1">
    <property type="nucleotide sequence ID" value="NC_007513.1"/>
</dbReference>
<dbReference type="SMR" id="Q3AW78"/>
<dbReference type="STRING" id="316279.Syncc9902_1970"/>
<dbReference type="KEGG" id="sye:Syncc9902_1970"/>
<dbReference type="eggNOG" id="COG0256">
    <property type="taxonomic scope" value="Bacteria"/>
</dbReference>
<dbReference type="HOGENOM" id="CLU_098841_0_1_3"/>
<dbReference type="OrthoDB" id="9810939at2"/>
<dbReference type="Proteomes" id="UP000002712">
    <property type="component" value="Chromosome"/>
</dbReference>
<dbReference type="GO" id="GO:0022625">
    <property type="term" value="C:cytosolic large ribosomal subunit"/>
    <property type="evidence" value="ECO:0007669"/>
    <property type="project" value="TreeGrafter"/>
</dbReference>
<dbReference type="GO" id="GO:0008097">
    <property type="term" value="F:5S rRNA binding"/>
    <property type="evidence" value="ECO:0007669"/>
    <property type="project" value="TreeGrafter"/>
</dbReference>
<dbReference type="GO" id="GO:0003735">
    <property type="term" value="F:structural constituent of ribosome"/>
    <property type="evidence" value="ECO:0007669"/>
    <property type="project" value="InterPro"/>
</dbReference>
<dbReference type="GO" id="GO:0006412">
    <property type="term" value="P:translation"/>
    <property type="evidence" value="ECO:0007669"/>
    <property type="project" value="UniProtKB-UniRule"/>
</dbReference>
<dbReference type="CDD" id="cd00432">
    <property type="entry name" value="Ribosomal_L18_L5e"/>
    <property type="match status" value="1"/>
</dbReference>
<dbReference type="FunFam" id="3.30.420.100:FF:000001">
    <property type="entry name" value="50S ribosomal protein L18"/>
    <property type="match status" value="1"/>
</dbReference>
<dbReference type="Gene3D" id="3.30.420.100">
    <property type="match status" value="1"/>
</dbReference>
<dbReference type="HAMAP" id="MF_01337_B">
    <property type="entry name" value="Ribosomal_uL18_B"/>
    <property type="match status" value="1"/>
</dbReference>
<dbReference type="InterPro" id="IPR004389">
    <property type="entry name" value="Ribosomal_uL18_bac-type"/>
</dbReference>
<dbReference type="InterPro" id="IPR005484">
    <property type="entry name" value="Ribosomal_uL18_bac/euk"/>
</dbReference>
<dbReference type="NCBIfam" id="TIGR00060">
    <property type="entry name" value="L18_bact"/>
    <property type="match status" value="1"/>
</dbReference>
<dbReference type="PANTHER" id="PTHR12899">
    <property type="entry name" value="39S RIBOSOMAL PROTEIN L18, MITOCHONDRIAL"/>
    <property type="match status" value="1"/>
</dbReference>
<dbReference type="PANTHER" id="PTHR12899:SF3">
    <property type="entry name" value="LARGE RIBOSOMAL SUBUNIT PROTEIN UL18M"/>
    <property type="match status" value="1"/>
</dbReference>
<dbReference type="Pfam" id="PF00861">
    <property type="entry name" value="Ribosomal_L18p"/>
    <property type="match status" value="1"/>
</dbReference>
<dbReference type="SUPFAM" id="SSF53137">
    <property type="entry name" value="Translational machinery components"/>
    <property type="match status" value="1"/>
</dbReference>
<keyword id="KW-1185">Reference proteome</keyword>
<keyword id="KW-0687">Ribonucleoprotein</keyword>
<keyword id="KW-0689">Ribosomal protein</keyword>
<keyword id="KW-0694">RNA-binding</keyword>
<keyword id="KW-0699">rRNA-binding</keyword>
<accession>Q3AW78</accession>